<keyword id="KW-0064">Aspartyl protease</keyword>
<keyword id="KW-1003">Cell membrane</keyword>
<keyword id="KW-0134">Cell wall</keyword>
<keyword id="KW-1015">Disulfide bond</keyword>
<keyword id="KW-0325">Glycoprotein</keyword>
<keyword id="KW-0336">GPI-anchor</keyword>
<keyword id="KW-0378">Hydrolase</keyword>
<keyword id="KW-0449">Lipoprotein</keyword>
<keyword id="KW-0472">Membrane</keyword>
<keyword id="KW-0645">Protease</keyword>
<keyword id="KW-0964">Secreted</keyword>
<keyword id="KW-0732">Signal</keyword>
<keyword id="KW-0843">Virulence</keyword>
<keyword id="KW-0865">Zymogen</keyword>
<organism>
    <name type="scientific">Candida albicans</name>
    <name type="common">Yeast</name>
    <dbReference type="NCBI Taxonomy" id="5476"/>
    <lineage>
        <taxon>Eukaryota</taxon>
        <taxon>Fungi</taxon>
        <taxon>Dikarya</taxon>
        <taxon>Ascomycota</taxon>
        <taxon>Saccharomycotina</taxon>
        <taxon>Pichiomycetes</taxon>
        <taxon>Debaryomycetaceae</taxon>
        <taxon>Candida/Lodderomyces clade</taxon>
        <taxon>Candida</taxon>
    </lineage>
</organism>
<dbReference type="EC" id="3.4.23.24" evidence="12 14 15 16"/>
<dbReference type="EMBL" id="AF043331">
    <property type="protein sequence ID" value="AAC69996.1"/>
    <property type="molecule type" value="Genomic_DNA"/>
</dbReference>
<dbReference type="SMR" id="O42779"/>
<dbReference type="ChEMBL" id="CHEMBL6139"/>
<dbReference type="MEROPS" id="A01.067"/>
<dbReference type="GlyCosmos" id="O42779">
    <property type="glycosylation" value="5 sites, No reported glycans"/>
</dbReference>
<dbReference type="VEuPathDB" id="FungiDB:C3_03870C_A"/>
<dbReference type="VEuPathDB" id="FungiDB:CAWG_02704"/>
<dbReference type="GO" id="GO:0005576">
    <property type="term" value="C:extracellular region"/>
    <property type="evidence" value="ECO:0007669"/>
    <property type="project" value="UniProtKB-KW"/>
</dbReference>
<dbReference type="GO" id="GO:0005886">
    <property type="term" value="C:plasma membrane"/>
    <property type="evidence" value="ECO:0007669"/>
    <property type="project" value="UniProtKB-SubCell"/>
</dbReference>
<dbReference type="GO" id="GO:0098552">
    <property type="term" value="C:side of membrane"/>
    <property type="evidence" value="ECO:0007669"/>
    <property type="project" value="UniProtKB-KW"/>
</dbReference>
<dbReference type="GO" id="GO:0004190">
    <property type="term" value="F:aspartic-type endopeptidase activity"/>
    <property type="evidence" value="ECO:0007669"/>
    <property type="project" value="UniProtKB-KW"/>
</dbReference>
<dbReference type="GO" id="GO:0006508">
    <property type="term" value="P:proteolysis"/>
    <property type="evidence" value="ECO:0007669"/>
    <property type="project" value="UniProtKB-KW"/>
</dbReference>
<dbReference type="CDD" id="cd05474">
    <property type="entry name" value="SAP_like"/>
    <property type="match status" value="1"/>
</dbReference>
<dbReference type="FunFam" id="2.40.70.10:FF:000023">
    <property type="entry name" value="Aspartic protease"/>
    <property type="match status" value="1"/>
</dbReference>
<dbReference type="Gene3D" id="2.40.70.10">
    <property type="entry name" value="Acid Proteases"/>
    <property type="match status" value="2"/>
</dbReference>
<dbReference type="InterPro" id="IPR001461">
    <property type="entry name" value="Aspartic_peptidase_A1"/>
</dbReference>
<dbReference type="InterPro" id="IPR001969">
    <property type="entry name" value="Aspartic_peptidase_AS"/>
</dbReference>
<dbReference type="InterPro" id="IPR033121">
    <property type="entry name" value="PEPTIDASE_A1"/>
</dbReference>
<dbReference type="InterPro" id="IPR021109">
    <property type="entry name" value="Peptidase_aspartic_dom_sf"/>
</dbReference>
<dbReference type="InterPro" id="IPR033876">
    <property type="entry name" value="SAP-like"/>
</dbReference>
<dbReference type="PANTHER" id="PTHR47966:SF65">
    <property type="entry name" value="ASPARTIC-TYPE ENDOPEPTIDASE"/>
    <property type="match status" value="1"/>
</dbReference>
<dbReference type="PANTHER" id="PTHR47966">
    <property type="entry name" value="BETA-SITE APP-CLEAVING ENZYME, ISOFORM A-RELATED"/>
    <property type="match status" value="1"/>
</dbReference>
<dbReference type="Pfam" id="PF00026">
    <property type="entry name" value="Asp"/>
    <property type="match status" value="2"/>
</dbReference>
<dbReference type="PRINTS" id="PR00792">
    <property type="entry name" value="PEPSIN"/>
</dbReference>
<dbReference type="SUPFAM" id="SSF50630">
    <property type="entry name" value="Acid proteases"/>
    <property type="match status" value="1"/>
</dbReference>
<dbReference type="PROSITE" id="PS00141">
    <property type="entry name" value="ASP_PROTEASE"/>
    <property type="match status" value="1"/>
</dbReference>
<dbReference type="PROSITE" id="PS51767">
    <property type="entry name" value="PEPTIDASE_A1"/>
    <property type="match status" value="1"/>
</dbReference>
<proteinExistence type="evidence at protein level"/>
<gene>
    <name evidence="18" type="primary">SAP9</name>
</gene>
<evidence type="ECO:0000250" key="1">
    <source>
        <dbReference type="UniProtKB" id="P0CS83"/>
    </source>
</evidence>
<evidence type="ECO:0000250" key="2">
    <source>
        <dbReference type="UniProtKB" id="P0CY27"/>
    </source>
</evidence>
<evidence type="ECO:0000250" key="3">
    <source>
        <dbReference type="UniProtKB" id="P0CY29"/>
    </source>
</evidence>
<evidence type="ECO:0000255" key="4"/>
<evidence type="ECO:0000255" key="5">
    <source>
        <dbReference type="PROSITE-ProRule" id="PRU01103"/>
    </source>
</evidence>
<evidence type="ECO:0000255" key="6">
    <source>
        <dbReference type="PROSITE-ProRule" id="PRU10094"/>
    </source>
</evidence>
<evidence type="ECO:0000256" key="7">
    <source>
        <dbReference type="SAM" id="MobiDB-lite"/>
    </source>
</evidence>
<evidence type="ECO:0000269" key="8">
    <source>
    </source>
</evidence>
<evidence type="ECO:0000269" key="9">
    <source>
    </source>
</evidence>
<evidence type="ECO:0000269" key="10">
    <source>
    </source>
</evidence>
<evidence type="ECO:0000269" key="11">
    <source>
    </source>
</evidence>
<evidence type="ECO:0000269" key="12">
    <source>
    </source>
</evidence>
<evidence type="ECO:0000269" key="13">
    <source>
    </source>
</evidence>
<evidence type="ECO:0000269" key="14">
    <source>
    </source>
</evidence>
<evidence type="ECO:0000269" key="15">
    <source>
    </source>
</evidence>
<evidence type="ECO:0000269" key="16">
    <source>
    </source>
</evidence>
<evidence type="ECO:0000269" key="17">
    <source>
    </source>
</evidence>
<evidence type="ECO:0000303" key="18">
    <source>
    </source>
</evidence>
<evidence type="ECO:0000305" key="19"/>
<reference key="1">
    <citation type="journal article" date="1998" name="Microbiology">
        <title>Differential regulation of SAP8 and SAP9, which encode two new members of the secreted aspartic proteinase family in Candida albicans.</title>
        <authorList>
            <person name="Monod M."/>
            <person name="Hube B."/>
            <person name="Hess D."/>
            <person name="Sanglard D."/>
        </authorList>
    </citation>
    <scope>NUCLEOTIDE SEQUENCE [GENOMIC DNA]</scope>
    <scope>INDUCTION</scope>
    <source>
        <strain>C74</strain>
    </source>
</reference>
<reference key="2">
    <citation type="journal article" date="2005" name="J. Antimicrob. Chemother.">
        <title>Exposure of Candida albicans to antifungal agents affects expression of SAP2 and SAP9 secreted proteinase genes.</title>
        <authorList>
            <person name="Copping V.M.S."/>
            <person name="Barelle C.J."/>
            <person name="Hube B."/>
            <person name="Gow N.A.R."/>
            <person name="Brown A.J.P."/>
            <person name="Odds F.C."/>
        </authorList>
    </citation>
    <scope>FUNCTION</scope>
    <scope>INDUCTION</scope>
</reference>
<reference key="3">
    <citation type="journal article" date="2006" name="J. Biol. Chem.">
        <title>Glycosylphosphatidylinositol-anchored proteases of Candida albicans target proteins necessary for both cellular processes and host-pathogen interactions.</title>
        <authorList>
            <person name="Albrecht A."/>
            <person name="Felk A."/>
            <person name="Pichova I."/>
            <person name="Naglik J.R."/>
            <person name="Schaller M."/>
            <person name="de Groot P."/>
            <person name="Maccallum D."/>
            <person name="Odds F.C."/>
            <person name="Schafer W."/>
            <person name="Klis F."/>
            <person name="Monod M."/>
            <person name="Hube B."/>
        </authorList>
    </citation>
    <scope>GLYCOSYLATION</scope>
    <scope>SUBCELLULAR LOCATION</scope>
    <scope>FUNCTION</scope>
</reference>
<reference key="4">
    <citation type="journal article" date="2009" name="Infect. Immun.">
        <title>The glycosylphosphatidylinositol-anchored protease Sap9 modulates the interaction of Candida albicans with human neutrophils.</title>
        <authorList>
            <person name="Hornbach A."/>
            <person name="Heyken A."/>
            <person name="Schild L."/>
            <person name="Hube B."/>
            <person name="Loffler J."/>
            <person name="Kurzai O."/>
        </authorList>
    </citation>
    <scope>FUNCTION</scope>
</reference>
<reference key="5">
    <citation type="journal article" date="2011" name="Eukaryot. Cell">
        <title>Effects of fluconazole on the secretome, the wall proteome, and wall integrity of the clinical fungus Candida albicans.</title>
        <authorList>
            <person name="Sorgo A.G."/>
            <person name="Heilmann C.J."/>
            <person name="Dekker H.L."/>
            <person name="Bekker M."/>
            <person name="Brul S."/>
            <person name="de Koster C.G."/>
            <person name="de Koning L.J."/>
            <person name="Klis F.M."/>
        </authorList>
    </citation>
    <scope>SUBCELLULAR LOCATION</scope>
    <scope>INDUCTION</scope>
</reference>
<reference key="6">
    <citation type="journal article" date="2011" name="J. Biochem.">
        <title>Comprehensive characterization of secreted aspartic proteases encoded by a virulence gene family in Candida albicans.</title>
        <authorList>
            <person name="Aoki W."/>
            <person name="Kitahara N."/>
            <person name="Miura N."/>
            <person name="Morisaka H."/>
            <person name="Yamamoto Y."/>
            <person name="Kuroda K."/>
            <person name="Ueda M."/>
        </authorList>
    </citation>
    <scope>CATALYTIC ACTIVITY</scope>
    <scope>BIOPHYSICOCHEMICAL PROPERTIES</scope>
</reference>
<reference key="7">
    <citation type="journal article" date="2013" name="Peptides">
        <title>Secreted aspartic peptidases of Candida albicans liberate bactericidal hemocidins from human hemoglobin.</title>
        <authorList>
            <person name="Bochenska O."/>
            <person name="Rapala-Kozik M."/>
            <person name="Wolak N."/>
            <person name="Bras G."/>
            <person name="Kozik A."/>
            <person name="Dubin A."/>
            <person name="Aoki W."/>
            <person name="Ueda M."/>
            <person name="Mak P."/>
        </authorList>
    </citation>
    <scope>FUNCTION</scope>
</reference>
<reference key="8">
    <citation type="journal article" date="2016" name="Acta Biochim. Pol.">
        <title>The action of ten secreted aspartic proteases of pathogenic yeast Candida albicans on major human salivary antimicrobial peptide, histatin 5.</title>
        <authorList>
            <person name="Bochenska O."/>
            <person name="Rapala-Kozik M."/>
            <person name="Wolak N."/>
            <person name="Aoki W."/>
            <person name="Ueda M."/>
            <person name="Kozik A."/>
        </authorList>
    </citation>
    <scope>FUNCTION</scope>
    <scope>CATALYTIC ACTIVITY</scope>
    <scope>BIOPHYSICOCHEMICAL PROPERTIES</scope>
</reference>
<reference key="9">
    <citation type="journal article" date="2018" name="FEBS J.">
        <title>Engineering improved variants of the antifungal peptide histatin 5 with reduced susceptibility to Candida albicans secreted aspartic proteases and enhanced antimicrobial potency.</title>
        <authorList>
            <person name="Ikonomova S.P."/>
            <person name="Moghaddam-Taaheri P."/>
            <person name="Jabra-Rizk M.A."/>
            <person name="Wang Y."/>
            <person name="Karlsson A.J."/>
        </authorList>
    </citation>
    <scope>FUNCTION</scope>
    <scope>CATALYTIC ACTIVITY</scope>
</reference>
<reference key="10">
    <citation type="journal article" date="2020" name="Protein Sci.">
        <title>Effects of histatin 5 modifications on antifungal activity and kinetics of proteolysis.</title>
        <authorList>
            <person name="Ikonomova S.P."/>
            <person name="Moghaddam-Taaheri P."/>
            <person name="Wang Y."/>
            <person name="Doolin M.T."/>
            <person name="Stroka K.M."/>
            <person name="Hube B."/>
            <person name="Karlsson A.J."/>
        </authorList>
    </citation>
    <scope>FUNCTION</scope>
    <scope>CATALYTIC ACTIVITY</scope>
</reference>
<feature type="signal peptide" evidence="4">
    <location>
        <begin position="1"/>
        <end position="17"/>
    </location>
</feature>
<feature type="propeptide" id="PRO_0000025864" description="Activation peptide" evidence="4">
    <location>
        <begin position="18"/>
        <end status="unknown"/>
    </location>
</feature>
<feature type="chain" id="PRO_0000025865" description="Secreted aspartic protease 9">
    <location>
        <begin status="unknown"/>
        <end position="544"/>
    </location>
</feature>
<feature type="domain" description="Peptidase A1" evidence="5">
    <location>
        <begin position="65"/>
        <end position="479"/>
    </location>
</feature>
<feature type="region of interest" description="Disordered" evidence="7">
    <location>
        <begin position="31"/>
        <end position="50"/>
    </location>
</feature>
<feature type="region of interest" description="Disordered" evidence="7">
    <location>
        <begin position="500"/>
        <end position="520"/>
    </location>
</feature>
<feature type="active site" evidence="6">
    <location>
        <position position="167"/>
    </location>
</feature>
<feature type="active site" evidence="6">
    <location>
        <position position="371"/>
    </location>
</feature>
<feature type="binding site" evidence="3">
    <location>
        <begin position="83"/>
        <end position="85"/>
    </location>
    <ligand>
        <name>pepstatin A</name>
        <dbReference type="ChEBI" id="CHEBI:190525"/>
        <note>inhibitor</note>
    </ligand>
</feature>
<feature type="binding site" evidence="3">
    <location>
        <begin position="371"/>
        <end position="375"/>
    </location>
    <ligand>
        <name>pepstatin A</name>
        <dbReference type="ChEBI" id="CHEBI:190525"/>
        <note>inhibitor</note>
    </ligand>
</feature>
<feature type="glycosylation site" description="N-linked (GlcNAc...) asparagine" evidence="4">
    <location>
        <position position="212"/>
    </location>
</feature>
<feature type="glycosylation site" description="N-linked (GlcNAc...) asparagine" evidence="4">
    <location>
        <position position="240"/>
    </location>
</feature>
<feature type="glycosylation site" description="N-linked (GlcNAc...) asparagine" evidence="4">
    <location>
        <position position="252"/>
    </location>
</feature>
<feature type="glycosylation site" description="N-linked (GlcNAc...) asparagine" evidence="4">
    <location>
        <position position="422"/>
    </location>
</feature>
<feature type="glycosylation site" description="N-linked (GlcNAc...) asparagine" evidence="4">
    <location>
        <position position="499"/>
    </location>
</feature>
<feature type="disulfide bond" evidence="2">
    <location>
        <begin position="98"/>
        <end position="195"/>
    </location>
</feature>
<feature type="disulfide bond" evidence="2">
    <location>
        <begin position="406"/>
        <end position="441"/>
    </location>
</feature>
<protein>
    <recommendedName>
        <fullName evidence="18">Secreted aspartic protease 9</fullName>
        <shortName evidence="19">ACP 9</shortName>
        <shortName evidence="19">Aspartate protease 9</shortName>
        <ecNumber evidence="12 14 15 16">3.4.23.24</ecNumber>
    </recommendedName>
    <alternativeName>
        <fullName evidence="19">Candidapepsin-9</fullName>
    </alternativeName>
</protein>
<sequence length="544" mass="58625">MRLNSVALLSLVATALAAKAPFKIDFEVRRGESKDDLSPEDDSNPRFVKRDGSLDMTLTNKQTFYMATLKIGSNEDENRVLEDTGSSDLWVMSHDLKCVSAPISKRNERSFGHGTGVKLNERELMQKRKNLYQPSRTIETDEEKEASEKIHNKLFGFGSIYSTVYITEGPGAYSTFSPLVGTEGGSGGSGGSNTCRSYGSFNTENSDTFKKNNTNDFEIQYADDTSAIGIWGYDDVTISNVTVKDLSFAIANETSSDVGVLGIGLPGLEVTTQLRYTYQNLPLKLKADGIIAKSLYSLYLNTADAKAGSILFGAIDHAKYQGDLVTVKMMRTYSQISYPVRIQVPVLKIDVESSSGSTTNILSGTTGVVLDTGSTLSYVFSDTLQSLGKALNGQYSNSVGAYVVNCNLADSSRTVDIEFGGNKTIKVPISDLVLQASKSTCILGVMQQSSSSSYMLFGDNILRSAYIVYDLDDYEVSLAQVSYTNKESIEVIGASGITNSSGSGTTSSSGTSTSTSTRHSAGSIISNPVYGLLLSLLISYYVLV</sequence>
<accession>O42779</accession>
<name>CARP9_CANAX</name>
<comment type="function">
    <text evidence="8 9 10 13">Secreted aspartic peptidases (SAPs) are a group of ten acidic hydrolases considered as key virulence factors (PubMed:15820985, PubMed:16269404, PubMed:19805528). These enzymes supply the fungus with nutrient amino acids as well as are able to degrade the selected host's proteins involved in the immune defense (PubMed:15820985, PubMed:16269404, PubMed:19805528). Moreover, acts toward human hemoglobin though limited proteolysis to generate a variety of antimicrobial hemocidins, enabling to compete with the other microorganisms of the same physiological niche using the microbicidal peptides generated from the host protein (PubMed:23927842).</text>
</comment>
<comment type="function">
    <text evidence="14 15 16">Plays a key role in defense against host by cleaving histatin-5 (Hst 5), a peptide from human saliva that carries out fungicidal activity (PubMed:27390786, PubMed:29143452, PubMed:31675138). The cleavage rate decreases in an order of SAP2 &gt; SAP9 &gt; SAP3 &gt; SAP7 &gt; SAP4 &gt; SAP1 &gt; SAP8 (PubMed:27390786). The first cleavage occurs between residues 'Lys-17' and 'His-18' of Hst 5, giving DSHAKRHHGYKRKFHEK and HHSHRGY peptides (PubMed:27390786). Simultaneously, the DSHAKRHHGYKRK peptide is also formed (PubMed:27390786). Further fragmentation by SAP9 results in FHEK product (PubMed:27390786).</text>
</comment>
<comment type="catalytic activity">
    <reaction evidence="12 14 15 16">
        <text>Preferential cleavage at the carboxyl of hydrophobic amino acids, but fails to cleave 15-Leu-|-Tyr-16, 16-Tyr-|-Leu-17 and 24-Phe-|-Phe-25 of insulin B chain. Activates trypsinogen, and degrades keratin.</text>
        <dbReference type="EC" id="3.4.23.24"/>
    </reaction>
</comment>
<comment type="biophysicochemical properties">
    <phDependence>
        <text evidence="12 14 15">Optimum pH is 5.5 using casein-resorufin as substrate, and 6.0-7.0, the pH of the saliva, for cleavage of Hst 5.</text>
    </phDependence>
</comment>
<comment type="subunit">
    <text evidence="1">Monomer.</text>
</comment>
<comment type="subcellular location">
    <subcellularLocation>
        <location evidence="19">Cell membrane</location>
        <topology evidence="19">Lipid-anchor</topology>
        <topology evidence="19">GPI-anchor</topology>
    </subcellularLocation>
    <subcellularLocation>
        <location evidence="9 11">Secreted</location>
        <location evidence="9 11">Cell wall</location>
    </subcellularLocation>
</comment>
<comment type="induction">
    <text evidence="8 11 17">Induced by fluconazole (PubMed:15820985, PubMed:21622905). Expression is regulated by growth phase, temperature, and white-opaque switch (PubMed:9802014).</text>
</comment>
<comment type="PTM">
    <text evidence="12">The GPI-anchor is attached to the protein in the endoplasmic reticulum and serves to target the protein to the cell surface. There, the glucosamine-inositol phospholipid moiety is cleaved off and the GPI-modified mannoprotein is covalently attached via its lipidless GPI glycan remnant to the 1,6-beta-glucan of the outer cell wall layer.</text>
</comment>
<comment type="similarity">
    <text evidence="19">Belongs to the peptidase A1 family.</text>
</comment>